<feature type="chain" id="PRO_0000175284" description="DNA-directed RNA polymerase subunit alpha">
    <location>
        <begin position="1"/>
        <end position="337"/>
    </location>
</feature>
<feature type="region of interest" description="Alpha N-terminal domain (alpha-NTD)" evidence="1">
    <location>
        <begin position="1"/>
        <end position="231"/>
    </location>
</feature>
<feature type="region of interest" description="Alpha C-terminal domain (alpha-CTD)" evidence="1">
    <location>
        <begin position="247"/>
        <end position="337"/>
    </location>
</feature>
<feature type="strand" evidence="2">
    <location>
        <begin position="13"/>
        <end position="32"/>
    </location>
</feature>
<feature type="helix" evidence="2">
    <location>
        <begin position="35"/>
        <end position="49"/>
    </location>
</feature>
<feature type="strand" evidence="2">
    <location>
        <begin position="53"/>
        <end position="61"/>
    </location>
</feature>
<feature type="strand" evidence="2">
    <location>
        <begin position="74"/>
        <end position="76"/>
    </location>
</feature>
<feature type="helix" evidence="2">
    <location>
        <begin position="78"/>
        <end position="85"/>
    </location>
</feature>
<feature type="strand" evidence="2">
    <location>
        <begin position="90"/>
        <end position="95"/>
    </location>
</feature>
<feature type="strand" evidence="2">
    <location>
        <begin position="97"/>
        <end position="112"/>
    </location>
</feature>
<feature type="helix" evidence="2">
    <location>
        <begin position="113"/>
        <end position="116"/>
    </location>
</feature>
<feature type="strand" evidence="2">
    <location>
        <begin position="119"/>
        <end position="125"/>
    </location>
</feature>
<feature type="strand" evidence="2">
    <location>
        <begin position="129"/>
        <end position="133"/>
    </location>
</feature>
<feature type="strand" evidence="2">
    <location>
        <begin position="138"/>
        <end position="148"/>
    </location>
</feature>
<feature type="strand" evidence="2">
    <location>
        <begin position="150"/>
        <end position="152"/>
    </location>
</feature>
<feature type="helix" evidence="2">
    <location>
        <begin position="154"/>
        <end position="161"/>
    </location>
</feature>
<feature type="strand" evidence="2">
    <location>
        <begin position="166"/>
        <end position="168"/>
    </location>
</feature>
<feature type="strand" evidence="2">
    <location>
        <begin position="175"/>
        <end position="188"/>
    </location>
</feature>
<feature type="strand" evidence="2">
    <location>
        <begin position="191"/>
        <end position="203"/>
    </location>
</feature>
<feature type="strand" evidence="2">
    <location>
        <begin position="205"/>
        <end position="207"/>
    </location>
</feature>
<feature type="helix" evidence="2">
    <location>
        <begin position="209"/>
        <end position="224"/>
    </location>
</feature>
<feature type="helix" evidence="2">
    <location>
        <begin position="225"/>
        <end position="227"/>
    </location>
</feature>
<evidence type="ECO:0000255" key="1">
    <source>
        <dbReference type="HAMAP-Rule" id="MF_00059"/>
    </source>
</evidence>
<evidence type="ECO:0007829" key="2">
    <source>
        <dbReference type="PDB" id="4NOI"/>
    </source>
</evidence>
<name>RPOA_CAMJE</name>
<reference key="1">
    <citation type="journal article" date="2000" name="Nature">
        <title>The genome sequence of the food-borne pathogen Campylobacter jejuni reveals hypervariable sequences.</title>
        <authorList>
            <person name="Parkhill J."/>
            <person name="Wren B.W."/>
            <person name="Mungall K.L."/>
            <person name="Ketley J.M."/>
            <person name="Churcher C.M."/>
            <person name="Basham D."/>
            <person name="Chillingworth T."/>
            <person name="Davies R.M."/>
            <person name="Feltwell T."/>
            <person name="Holroyd S."/>
            <person name="Jagels K."/>
            <person name="Karlyshev A.V."/>
            <person name="Moule S."/>
            <person name="Pallen M.J."/>
            <person name="Penn C.W."/>
            <person name="Quail M.A."/>
            <person name="Rajandream M.A."/>
            <person name="Rutherford K.M."/>
            <person name="van Vliet A.H.M."/>
            <person name="Whitehead S."/>
            <person name="Barrell B.G."/>
        </authorList>
    </citation>
    <scope>NUCLEOTIDE SEQUENCE [LARGE SCALE GENOMIC DNA]</scope>
    <source>
        <strain>ATCC 700819 / NCTC 11168</strain>
    </source>
</reference>
<proteinExistence type="evidence at protein level"/>
<dbReference type="EC" id="2.7.7.6" evidence="1"/>
<dbReference type="EMBL" id="AL111168">
    <property type="protein sequence ID" value="CAL35692.1"/>
    <property type="molecule type" value="Genomic_DNA"/>
</dbReference>
<dbReference type="PIR" id="A81255">
    <property type="entry name" value="A81255"/>
</dbReference>
<dbReference type="RefSeq" id="WP_002851403.1">
    <property type="nucleotide sequence ID" value="NZ_SZUC01000002.1"/>
</dbReference>
<dbReference type="RefSeq" id="YP_002344964.1">
    <property type="nucleotide sequence ID" value="NC_002163.1"/>
</dbReference>
<dbReference type="PDB" id="4NOI">
    <property type="method" value="X-ray"/>
    <property type="resolution" value="2.17 A"/>
    <property type="chains" value="A/B=1-337"/>
</dbReference>
<dbReference type="PDBsum" id="4NOI"/>
<dbReference type="SMR" id="Q9PM80"/>
<dbReference type="IntAct" id="Q9PM80">
    <property type="interactions" value="2"/>
</dbReference>
<dbReference type="STRING" id="192222.Cj1595"/>
<dbReference type="PaxDb" id="192222-Cj1595"/>
<dbReference type="EnsemblBacteria" id="CAL35692">
    <property type="protein sequence ID" value="CAL35692"/>
    <property type="gene ID" value="Cj1595"/>
</dbReference>
<dbReference type="GeneID" id="905865"/>
<dbReference type="KEGG" id="cje:Cj1595"/>
<dbReference type="PATRIC" id="fig|192222.6.peg.1571"/>
<dbReference type="eggNOG" id="COG0202">
    <property type="taxonomic scope" value="Bacteria"/>
</dbReference>
<dbReference type="HOGENOM" id="CLU_053084_0_1_7"/>
<dbReference type="OrthoDB" id="9805706at2"/>
<dbReference type="EvolutionaryTrace" id="Q9PM80"/>
<dbReference type="Proteomes" id="UP000000799">
    <property type="component" value="Chromosome"/>
</dbReference>
<dbReference type="GO" id="GO:0005737">
    <property type="term" value="C:cytoplasm"/>
    <property type="evidence" value="ECO:0007669"/>
    <property type="project" value="UniProtKB-ARBA"/>
</dbReference>
<dbReference type="GO" id="GO:0000428">
    <property type="term" value="C:DNA-directed RNA polymerase complex"/>
    <property type="evidence" value="ECO:0007669"/>
    <property type="project" value="UniProtKB-KW"/>
</dbReference>
<dbReference type="GO" id="GO:0003677">
    <property type="term" value="F:DNA binding"/>
    <property type="evidence" value="ECO:0007669"/>
    <property type="project" value="UniProtKB-UniRule"/>
</dbReference>
<dbReference type="GO" id="GO:0003899">
    <property type="term" value="F:DNA-directed RNA polymerase activity"/>
    <property type="evidence" value="ECO:0007669"/>
    <property type="project" value="UniProtKB-UniRule"/>
</dbReference>
<dbReference type="GO" id="GO:0046983">
    <property type="term" value="F:protein dimerization activity"/>
    <property type="evidence" value="ECO:0007669"/>
    <property type="project" value="InterPro"/>
</dbReference>
<dbReference type="GO" id="GO:0006351">
    <property type="term" value="P:DNA-templated transcription"/>
    <property type="evidence" value="ECO:0007669"/>
    <property type="project" value="UniProtKB-UniRule"/>
</dbReference>
<dbReference type="CDD" id="cd06928">
    <property type="entry name" value="RNAP_alpha_NTD"/>
    <property type="match status" value="1"/>
</dbReference>
<dbReference type="Gene3D" id="1.10.150.20">
    <property type="entry name" value="5' to 3' exonuclease, C-terminal subdomain"/>
    <property type="match status" value="1"/>
</dbReference>
<dbReference type="Gene3D" id="2.170.120.12">
    <property type="entry name" value="DNA-directed RNA polymerase, insert domain"/>
    <property type="match status" value="1"/>
</dbReference>
<dbReference type="Gene3D" id="3.30.1360.10">
    <property type="entry name" value="RNA polymerase, RBP11-like subunit"/>
    <property type="match status" value="1"/>
</dbReference>
<dbReference type="HAMAP" id="MF_00059">
    <property type="entry name" value="RNApol_bact_RpoA"/>
    <property type="match status" value="1"/>
</dbReference>
<dbReference type="InterPro" id="IPR011262">
    <property type="entry name" value="DNA-dir_RNA_pol_insert"/>
</dbReference>
<dbReference type="InterPro" id="IPR011263">
    <property type="entry name" value="DNA-dir_RNA_pol_RpoA/D/Rpb3"/>
</dbReference>
<dbReference type="InterPro" id="IPR011773">
    <property type="entry name" value="DNA-dir_RpoA"/>
</dbReference>
<dbReference type="InterPro" id="IPR036603">
    <property type="entry name" value="RBP11-like"/>
</dbReference>
<dbReference type="InterPro" id="IPR011260">
    <property type="entry name" value="RNAP_asu_C"/>
</dbReference>
<dbReference type="InterPro" id="IPR036643">
    <property type="entry name" value="RNApol_insert_sf"/>
</dbReference>
<dbReference type="NCBIfam" id="NF003517">
    <property type="entry name" value="PRK05182.2-3"/>
    <property type="match status" value="1"/>
</dbReference>
<dbReference type="NCBIfam" id="NF003519">
    <property type="entry name" value="PRK05182.2-5"/>
    <property type="match status" value="1"/>
</dbReference>
<dbReference type="NCBIfam" id="TIGR02027">
    <property type="entry name" value="rpoA"/>
    <property type="match status" value="1"/>
</dbReference>
<dbReference type="Pfam" id="PF01000">
    <property type="entry name" value="RNA_pol_A_bac"/>
    <property type="match status" value="1"/>
</dbReference>
<dbReference type="Pfam" id="PF03118">
    <property type="entry name" value="RNA_pol_A_CTD"/>
    <property type="match status" value="1"/>
</dbReference>
<dbReference type="Pfam" id="PF01193">
    <property type="entry name" value="RNA_pol_L"/>
    <property type="match status" value="1"/>
</dbReference>
<dbReference type="SMART" id="SM00662">
    <property type="entry name" value="RPOLD"/>
    <property type="match status" value="1"/>
</dbReference>
<dbReference type="SUPFAM" id="SSF47789">
    <property type="entry name" value="C-terminal domain of RNA polymerase alpha subunit"/>
    <property type="match status" value="1"/>
</dbReference>
<dbReference type="SUPFAM" id="SSF56553">
    <property type="entry name" value="Insert subdomain of RNA polymerase alpha subunit"/>
    <property type="match status" value="1"/>
</dbReference>
<dbReference type="SUPFAM" id="SSF55257">
    <property type="entry name" value="RBP11-like subunits of RNA polymerase"/>
    <property type="match status" value="1"/>
</dbReference>
<organism>
    <name type="scientific">Campylobacter jejuni subsp. jejuni serotype O:2 (strain ATCC 700819 / NCTC 11168)</name>
    <dbReference type="NCBI Taxonomy" id="192222"/>
    <lineage>
        <taxon>Bacteria</taxon>
        <taxon>Pseudomonadati</taxon>
        <taxon>Campylobacterota</taxon>
        <taxon>Epsilonproteobacteria</taxon>
        <taxon>Campylobacterales</taxon>
        <taxon>Campylobacteraceae</taxon>
        <taxon>Campylobacter</taxon>
    </lineage>
</organism>
<keyword id="KW-0002">3D-structure</keyword>
<keyword id="KW-0240">DNA-directed RNA polymerase</keyword>
<keyword id="KW-0548">Nucleotidyltransferase</keyword>
<keyword id="KW-1185">Reference proteome</keyword>
<keyword id="KW-0804">Transcription</keyword>
<keyword id="KW-0808">Transferase</keyword>
<accession>Q9PM80</accession>
<accession>Q0P833</accession>
<protein>
    <recommendedName>
        <fullName evidence="1">DNA-directed RNA polymerase subunit alpha</fullName>
        <shortName evidence="1">RNAP subunit alpha</shortName>
        <ecNumber evidence="1">2.7.7.6</ecNumber>
    </recommendedName>
    <alternativeName>
        <fullName evidence="1">RNA polymerase subunit alpha</fullName>
    </alternativeName>
    <alternativeName>
        <fullName evidence="1">Transcriptase subunit alpha</fullName>
    </alternativeName>
</protein>
<gene>
    <name evidence="1" type="primary">rpoA</name>
    <name type="ordered locus">Cj1595</name>
</gene>
<sequence length="337" mass="37686">MRNITTSAYTPTEFTIENISDTVAKISAWPFEIGYGITLAHPLRRLLYTSTIGYAPTAIHIDGVAHEFDSMRGMLEDVALFIINLKKLRFKIKGDSNKEIVEFSFKGSKEIYGKDLNNDQVEVVNKDAYLATINEDAELKFTLIVEKGIGYVPSEEIKELINDPKFIALDAFFTPVREATYDIEKVLFEDNPDYEKVVLTVTTDGQITPNEAFQNALEAMYKQLSVFDKITNVRSVIKNQATSNELENTKLLQNITDLNLSARSYNCLEKAGVVYIGELALMSVSELAGLKNLGKKSLDEIKNIMESIGFPVGTSKLSDNKEILKNKIAELKAQNEG</sequence>
<comment type="function">
    <text evidence="1">DNA-dependent RNA polymerase catalyzes the transcription of DNA into RNA using the four ribonucleoside triphosphates as substrates.</text>
</comment>
<comment type="catalytic activity">
    <reaction evidence="1">
        <text>RNA(n) + a ribonucleoside 5'-triphosphate = RNA(n+1) + diphosphate</text>
        <dbReference type="Rhea" id="RHEA:21248"/>
        <dbReference type="Rhea" id="RHEA-COMP:14527"/>
        <dbReference type="Rhea" id="RHEA-COMP:17342"/>
        <dbReference type="ChEBI" id="CHEBI:33019"/>
        <dbReference type="ChEBI" id="CHEBI:61557"/>
        <dbReference type="ChEBI" id="CHEBI:140395"/>
        <dbReference type="EC" id="2.7.7.6"/>
    </reaction>
</comment>
<comment type="subunit">
    <text evidence="1">Homodimer. The RNAP catalytic core consists of 2 alpha, 1 beta, 1 beta' and 1 omega subunit. When a sigma factor is associated with the core the holoenzyme is formed, which can initiate transcription.</text>
</comment>
<comment type="domain">
    <text evidence="1">The N-terminal domain is essential for RNAP assembly and basal transcription, whereas the C-terminal domain is involved in interaction with transcriptional regulators and with upstream promoter elements.</text>
</comment>
<comment type="similarity">
    <text evidence="1">Belongs to the RNA polymerase alpha chain family.</text>
</comment>